<comment type="function">
    <text evidence="1">Purine salvage pathway enzyme that catalyzes the transfer of the ribosyl-5-phosphate group from 5-phospho-alpha-D-ribose 1-diphosphate (PRPP) to the N9 position of the 6-oxopurines guanine and xanthine to form the corresponding ribonucleotides GMP (guanosine 5'-monophosphate) and XMP (xanthosine 5'-monophosphate), with the release of PPi. To a lesser extent, also acts on hypoxanthine.</text>
</comment>
<comment type="catalytic activity">
    <reaction evidence="1">
        <text>GMP + diphosphate = guanine + 5-phospho-alpha-D-ribose 1-diphosphate</text>
        <dbReference type="Rhea" id="RHEA:25424"/>
        <dbReference type="ChEBI" id="CHEBI:16235"/>
        <dbReference type="ChEBI" id="CHEBI:33019"/>
        <dbReference type="ChEBI" id="CHEBI:58017"/>
        <dbReference type="ChEBI" id="CHEBI:58115"/>
    </reaction>
    <physiologicalReaction direction="right-to-left" evidence="1">
        <dbReference type="Rhea" id="RHEA:25426"/>
    </physiologicalReaction>
</comment>
<comment type="catalytic activity">
    <reaction evidence="1">
        <text>XMP + diphosphate = xanthine + 5-phospho-alpha-D-ribose 1-diphosphate</text>
        <dbReference type="Rhea" id="RHEA:10800"/>
        <dbReference type="ChEBI" id="CHEBI:17712"/>
        <dbReference type="ChEBI" id="CHEBI:33019"/>
        <dbReference type="ChEBI" id="CHEBI:57464"/>
        <dbReference type="ChEBI" id="CHEBI:58017"/>
        <dbReference type="EC" id="2.4.2.22"/>
    </reaction>
    <physiologicalReaction direction="right-to-left" evidence="1">
        <dbReference type="Rhea" id="RHEA:10802"/>
    </physiologicalReaction>
</comment>
<comment type="catalytic activity">
    <reaction evidence="1">
        <text>IMP + diphosphate = hypoxanthine + 5-phospho-alpha-D-ribose 1-diphosphate</text>
        <dbReference type="Rhea" id="RHEA:17973"/>
        <dbReference type="ChEBI" id="CHEBI:17368"/>
        <dbReference type="ChEBI" id="CHEBI:33019"/>
        <dbReference type="ChEBI" id="CHEBI:58017"/>
        <dbReference type="ChEBI" id="CHEBI:58053"/>
    </reaction>
    <physiologicalReaction direction="right-to-left" evidence="1">
        <dbReference type="Rhea" id="RHEA:17975"/>
    </physiologicalReaction>
</comment>
<comment type="cofactor">
    <cofactor evidence="1">
        <name>Mg(2+)</name>
        <dbReference type="ChEBI" id="CHEBI:18420"/>
    </cofactor>
</comment>
<comment type="pathway">
    <text evidence="1">Purine metabolism; GMP biosynthesis via salvage pathway; GMP from guanine: step 1/1.</text>
</comment>
<comment type="pathway">
    <text evidence="1">Purine metabolism; XMP biosynthesis via salvage pathway; XMP from xanthine: step 1/1.</text>
</comment>
<comment type="subunit">
    <text evidence="1">Homotetramer.</text>
</comment>
<comment type="subcellular location">
    <subcellularLocation>
        <location evidence="1">Cell inner membrane</location>
        <topology evidence="1">Peripheral membrane protein</topology>
    </subcellularLocation>
</comment>
<comment type="similarity">
    <text evidence="1">Belongs to the purine/pyrimidine phosphoribosyltransferase family. XGPT subfamily.</text>
</comment>
<feature type="chain" id="PRO_0000139668" description="Xanthine-guanine phosphoribosyltransferase">
    <location>
        <begin position="1"/>
        <end position="152"/>
    </location>
</feature>
<feature type="binding site" evidence="1">
    <location>
        <begin position="37"/>
        <end position="38"/>
    </location>
    <ligand>
        <name>5-phospho-alpha-D-ribose 1-diphosphate</name>
        <dbReference type="ChEBI" id="CHEBI:58017"/>
    </ligand>
</feature>
<feature type="binding site" evidence="1">
    <location>
        <position position="69"/>
    </location>
    <ligand>
        <name>5-phospho-alpha-D-ribose 1-diphosphate</name>
        <dbReference type="ChEBI" id="CHEBI:58017"/>
    </ligand>
</feature>
<feature type="binding site" evidence="1">
    <location>
        <position position="69"/>
    </location>
    <ligand>
        <name>GMP</name>
        <dbReference type="ChEBI" id="CHEBI:58115"/>
    </ligand>
</feature>
<feature type="binding site" evidence="1">
    <location>
        <begin position="88"/>
        <end position="96"/>
    </location>
    <ligand>
        <name>5-phospho-alpha-D-ribose 1-diphosphate</name>
        <dbReference type="ChEBI" id="CHEBI:58017"/>
    </ligand>
</feature>
<feature type="binding site" evidence="1">
    <location>
        <position position="89"/>
    </location>
    <ligand>
        <name>Mg(2+)</name>
        <dbReference type="ChEBI" id="CHEBI:18420"/>
    </ligand>
</feature>
<feature type="binding site" evidence="1">
    <location>
        <begin position="92"/>
        <end position="96"/>
    </location>
    <ligand>
        <name>GMP</name>
        <dbReference type="ChEBI" id="CHEBI:58115"/>
    </ligand>
</feature>
<feature type="binding site" evidence="1">
    <location>
        <position position="92"/>
    </location>
    <ligand>
        <name>guanine</name>
        <dbReference type="ChEBI" id="CHEBI:16235"/>
    </ligand>
</feature>
<feature type="binding site" evidence="1">
    <location>
        <position position="92"/>
    </location>
    <ligand>
        <name>xanthine</name>
        <dbReference type="ChEBI" id="CHEBI:17712"/>
    </ligand>
</feature>
<feature type="binding site" evidence="1">
    <location>
        <begin position="134"/>
        <end position="135"/>
    </location>
    <ligand>
        <name>GMP</name>
        <dbReference type="ChEBI" id="CHEBI:58115"/>
    </ligand>
</feature>
<feature type="binding site" evidence="1">
    <location>
        <position position="135"/>
    </location>
    <ligand>
        <name>guanine</name>
        <dbReference type="ChEBI" id="CHEBI:16235"/>
    </ligand>
</feature>
<feature type="binding site" evidence="1">
    <location>
        <position position="135"/>
    </location>
    <ligand>
        <name>xanthine</name>
        <dbReference type="ChEBI" id="CHEBI:17712"/>
    </ligand>
</feature>
<gene>
    <name evidence="1" type="primary">gpt</name>
    <name type="ordered locus">c0384</name>
</gene>
<keyword id="KW-0997">Cell inner membrane</keyword>
<keyword id="KW-1003">Cell membrane</keyword>
<keyword id="KW-0328">Glycosyltransferase</keyword>
<keyword id="KW-0460">Magnesium</keyword>
<keyword id="KW-0472">Membrane</keyword>
<keyword id="KW-0479">Metal-binding</keyword>
<keyword id="KW-0660">Purine salvage</keyword>
<keyword id="KW-1185">Reference proteome</keyword>
<keyword id="KW-0808">Transferase</keyword>
<protein>
    <recommendedName>
        <fullName evidence="1">Xanthine-guanine phosphoribosyltransferase</fullName>
        <shortName evidence="1">XGPRT</shortName>
        <ecNumber evidence="1">2.4.2.-</ecNumber>
        <ecNumber evidence="1">2.4.2.22</ecNumber>
    </recommendedName>
    <alternativeName>
        <fullName evidence="1">Xanthine phosphoribosyltransferase</fullName>
    </alternativeName>
</protein>
<accession>Q8FKM7</accession>
<sequence>MSEKYIVTWDMLQIHARKLASRLMPSEQWKGIIAVSRGGLVPGALLARELGIRHVDTVCISSYDHDNQRELKVLKRAEGDGEGFIVIDDLVDTGGTAVAIREMYPKAHFVTIFAKPAGRPLVDDYVVDIPQNTWIEQPWDMGVVFVPPISGR</sequence>
<organism>
    <name type="scientific">Escherichia coli O6:H1 (strain CFT073 / ATCC 700928 / UPEC)</name>
    <dbReference type="NCBI Taxonomy" id="199310"/>
    <lineage>
        <taxon>Bacteria</taxon>
        <taxon>Pseudomonadati</taxon>
        <taxon>Pseudomonadota</taxon>
        <taxon>Gammaproteobacteria</taxon>
        <taxon>Enterobacterales</taxon>
        <taxon>Enterobacteriaceae</taxon>
        <taxon>Escherichia</taxon>
    </lineage>
</organism>
<proteinExistence type="inferred from homology"/>
<reference key="1">
    <citation type="journal article" date="2002" name="Proc. Natl. Acad. Sci. U.S.A.">
        <title>Extensive mosaic structure revealed by the complete genome sequence of uropathogenic Escherichia coli.</title>
        <authorList>
            <person name="Welch R.A."/>
            <person name="Burland V."/>
            <person name="Plunkett G. III"/>
            <person name="Redford P."/>
            <person name="Roesch P."/>
            <person name="Rasko D."/>
            <person name="Buckles E.L."/>
            <person name="Liou S.-R."/>
            <person name="Boutin A."/>
            <person name="Hackett J."/>
            <person name="Stroud D."/>
            <person name="Mayhew G.F."/>
            <person name="Rose D.J."/>
            <person name="Zhou S."/>
            <person name="Schwartz D.C."/>
            <person name="Perna N.T."/>
            <person name="Mobley H.L.T."/>
            <person name="Donnenberg M.S."/>
            <person name="Blattner F.R."/>
        </authorList>
    </citation>
    <scope>NUCLEOTIDE SEQUENCE [LARGE SCALE GENOMIC DNA]</scope>
    <source>
        <strain>CFT073 / ATCC 700928 / UPEC</strain>
    </source>
</reference>
<dbReference type="EC" id="2.4.2.-" evidence="1"/>
<dbReference type="EC" id="2.4.2.22" evidence="1"/>
<dbReference type="EMBL" id="AE014075">
    <property type="protein sequence ID" value="AAN78865.1"/>
    <property type="molecule type" value="Genomic_DNA"/>
</dbReference>
<dbReference type="RefSeq" id="WP_001291991.1">
    <property type="nucleotide sequence ID" value="NZ_CP051263.1"/>
</dbReference>
<dbReference type="SMR" id="Q8FKM7"/>
<dbReference type="STRING" id="199310.c0384"/>
<dbReference type="GeneID" id="86945191"/>
<dbReference type="KEGG" id="ecc:c0384"/>
<dbReference type="eggNOG" id="COG2236">
    <property type="taxonomic scope" value="Bacteria"/>
</dbReference>
<dbReference type="HOGENOM" id="CLU_080904_3_0_6"/>
<dbReference type="BioCyc" id="ECOL199310:C0384-MONOMER"/>
<dbReference type="UniPathway" id="UPA00602">
    <property type="reaction ID" value="UER00658"/>
</dbReference>
<dbReference type="UniPathway" id="UPA00909">
    <property type="reaction ID" value="UER00887"/>
</dbReference>
<dbReference type="Proteomes" id="UP000001410">
    <property type="component" value="Chromosome"/>
</dbReference>
<dbReference type="GO" id="GO:0005829">
    <property type="term" value="C:cytosol"/>
    <property type="evidence" value="ECO:0007669"/>
    <property type="project" value="TreeGrafter"/>
</dbReference>
<dbReference type="GO" id="GO:0005886">
    <property type="term" value="C:plasma membrane"/>
    <property type="evidence" value="ECO:0007669"/>
    <property type="project" value="UniProtKB-SubCell"/>
</dbReference>
<dbReference type="GO" id="GO:0052657">
    <property type="term" value="F:guanine phosphoribosyltransferase activity"/>
    <property type="evidence" value="ECO:0007669"/>
    <property type="project" value="RHEA"/>
</dbReference>
<dbReference type="GO" id="GO:0004422">
    <property type="term" value="F:hypoxanthine phosphoribosyltransferase activity"/>
    <property type="evidence" value="ECO:0007669"/>
    <property type="project" value="TreeGrafter"/>
</dbReference>
<dbReference type="GO" id="GO:0000287">
    <property type="term" value="F:magnesium ion binding"/>
    <property type="evidence" value="ECO:0007669"/>
    <property type="project" value="UniProtKB-UniRule"/>
</dbReference>
<dbReference type="GO" id="GO:0000310">
    <property type="term" value="F:xanthine phosphoribosyltransferase activity"/>
    <property type="evidence" value="ECO:0007669"/>
    <property type="project" value="UniProtKB-UniRule"/>
</dbReference>
<dbReference type="GO" id="GO:0032263">
    <property type="term" value="P:GMP salvage"/>
    <property type="evidence" value="ECO:0007669"/>
    <property type="project" value="UniProtKB-UniRule"/>
</dbReference>
<dbReference type="GO" id="GO:0032264">
    <property type="term" value="P:IMP salvage"/>
    <property type="evidence" value="ECO:0007669"/>
    <property type="project" value="TreeGrafter"/>
</dbReference>
<dbReference type="GO" id="GO:0006166">
    <property type="term" value="P:purine ribonucleoside salvage"/>
    <property type="evidence" value="ECO:0007669"/>
    <property type="project" value="UniProtKB-KW"/>
</dbReference>
<dbReference type="GO" id="GO:0032265">
    <property type="term" value="P:XMP salvage"/>
    <property type="evidence" value="ECO:0007669"/>
    <property type="project" value="UniProtKB-UniRule"/>
</dbReference>
<dbReference type="CDD" id="cd06223">
    <property type="entry name" value="PRTases_typeI"/>
    <property type="match status" value="1"/>
</dbReference>
<dbReference type="FunFam" id="3.40.50.2020:FF:000009">
    <property type="entry name" value="Xanthine phosphoribosyltransferase"/>
    <property type="match status" value="1"/>
</dbReference>
<dbReference type="Gene3D" id="3.40.50.2020">
    <property type="match status" value="1"/>
</dbReference>
<dbReference type="HAMAP" id="MF_01903">
    <property type="entry name" value="XGPRT"/>
    <property type="match status" value="1"/>
</dbReference>
<dbReference type="InterPro" id="IPR000836">
    <property type="entry name" value="PRibTrfase_dom"/>
</dbReference>
<dbReference type="InterPro" id="IPR029057">
    <property type="entry name" value="PRTase-like"/>
</dbReference>
<dbReference type="InterPro" id="IPR023747">
    <property type="entry name" value="Xanthine_Guanine_PRibTrfase"/>
</dbReference>
<dbReference type="NCBIfam" id="NF006613">
    <property type="entry name" value="PRK09177.1"/>
    <property type="match status" value="1"/>
</dbReference>
<dbReference type="PANTHER" id="PTHR39563">
    <property type="entry name" value="XANTHINE PHOSPHORIBOSYLTRANSFERASE"/>
    <property type="match status" value="1"/>
</dbReference>
<dbReference type="PANTHER" id="PTHR39563:SF1">
    <property type="entry name" value="XANTHINE-GUANINE PHOSPHORIBOSYLTRANSFERASE"/>
    <property type="match status" value="1"/>
</dbReference>
<dbReference type="Pfam" id="PF00156">
    <property type="entry name" value="Pribosyltran"/>
    <property type="match status" value="1"/>
</dbReference>
<dbReference type="SUPFAM" id="SSF53271">
    <property type="entry name" value="PRTase-like"/>
    <property type="match status" value="1"/>
</dbReference>
<dbReference type="PROSITE" id="PS00103">
    <property type="entry name" value="PUR_PYR_PR_TRANSFER"/>
    <property type="match status" value="1"/>
</dbReference>
<evidence type="ECO:0000255" key="1">
    <source>
        <dbReference type="HAMAP-Rule" id="MF_01903"/>
    </source>
</evidence>
<name>XGPT_ECOL6</name>